<dbReference type="EC" id="1.17.1.8" evidence="1"/>
<dbReference type="EMBL" id="CP000518">
    <property type="protein sequence ID" value="ABL91351.1"/>
    <property type="molecule type" value="Genomic_DNA"/>
</dbReference>
<dbReference type="SMR" id="A1UEU3"/>
<dbReference type="STRING" id="189918.Mkms_2153"/>
<dbReference type="KEGG" id="mkm:Mkms_2153"/>
<dbReference type="HOGENOM" id="CLU_047479_0_1_11"/>
<dbReference type="OrthoDB" id="9790352at2"/>
<dbReference type="UniPathway" id="UPA00034">
    <property type="reaction ID" value="UER00018"/>
</dbReference>
<dbReference type="GO" id="GO:0005829">
    <property type="term" value="C:cytosol"/>
    <property type="evidence" value="ECO:0007669"/>
    <property type="project" value="TreeGrafter"/>
</dbReference>
<dbReference type="GO" id="GO:0008839">
    <property type="term" value="F:4-hydroxy-tetrahydrodipicolinate reductase"/>
    <property type="evidence" value="ECO:0007669"/>
    <property type="project" value="UniProtKB-EC"/>
</dbReference>
<dbReference type="GO" id="GO:0051287">
    <property type="term" value="F:NAD binding"/>
    <property type="evidence" value="ECO:0007669"/>
    <property type="project" value="UniProtKB-UniRule"/>
</dbReference>
<dbReference type="GO" id="GO:0050661">
    <property type="term" value="F:NADP binding"/>
    <property type="evidence" value="ECO:0007669"/>
    <property type="project" value="UniProtKB-UniRule"/>
</dbReference>
<dbReference type="GO" id="GO:0016726">
    <property type="term" value="F:oxidoreductase activity, acting on CH or CH2 groups, NAD or NADP as acceptor"/>
    <property type="evidence" value="ECO:0007669"/>
    <property type="project" value="UniProtKB-UniRule"/>
</dbReference>
<dbReference type="GO" id="GO:0019877">
    <property type="term" value="P:diaminopimelate biosynthetic process"/>
    <property type="evidence" value="ECO:0007669"/>
    <property type="project" value="UniProtKB-UniRule"/>
</dbReference>
<dbReference type="GO" id="GO:0009089">
    <property type="term" value="P:lysine biosynthetic process via diaminopimelate"/>
    <property type="evidence" value="ECO:0007669"/>
    <property type="project" value="UniProtKB-UniRule"/>
</dbReference>
<dbReference type="CDD" id="cd02274">
    <property type="entry name" value="DHDPR_N"/>
    <property type="match status" value="1"/>
</dbReference>
<dbReference type="FunFam" id="3.30.360.10:FF:000009">
    <property type="entry name" value="4-hydroxy-tetrahydrodipicolinate reductase"/>
    <property type="match status" value="1"/>
</dbReference>
<dbReference type="Gene3D" id="3.30.360.10">
    <property type="entry name" value="Dihydrodipicolinate Reductase, domain 2"/>
    <property type="match status" value="1"/>
</dbReference>
<dbReference type="Gene3D" id="3.40.50.720">
    <property type="entry name" value="NAD(P)-binding Rossmann-like Domain"/>
    <property type="match status" value="1"/>
</dbReference>
<dbReference type="HAMAP" id="MF_00102">
    <property type="entry name" value="DapB"/>
    <property type="match status" value="1"/>
</dbReference>
<dbReference type="InterPro" id="IPR022663">
    <property type="entry name" value="DapB_C"/>
</dbReference>
<dbReference type="InterPro" id="IPR000846">
    <property type="entry name" value="DapB_N"/>
</dbReference>
<dbReference type="InterPro" id="IPR022664">
    <property type="entry name" value="DapB_N_CS"/>
</dbReference>
<dbReference type="InterPro" id="IPR023940">
    <property type="entry name" value="DHDPR_bac"/>
</dbReference>
<dbReference type="InterPro" id="IPR036291">
    <property type="entry name" value="NAD(P)-bd_dom_sf"/>
</dbReference>
<dbReference type="NCBIfam" id="TIGR00036">
    <property type="entry name" value="dapB"/>
    <property type="match status" value="1"/>
</dbReference>
<dbReference type="PANTHER" id="PTHR20836:SF0">
    <property type="entry name" value="4-HYDROXY-TETRAHYDRODIPICOLINATE REDUCTASE 1, CHLOROPLASTIC-RELATED"/>
    <property type="match status" value="1"/>
</dbReference>
<dbReference type="PANTHER" id="PTHR20836">
    <property type="entry name" value="DIHYDRODIPICOLINATE REDUCTASE"/>
    <property type="match status" value="1"/>
</dbReference>
<dbReference type="Pfam" id="PF05173">
    <property type="entry name" value="DapB_C"/>
    <property type="match status" value="1"/>
</dbReference>
<dbReference type="Pfam" id="PF01113">
    <property type="entry name" value="DapB_N"/>
    <property type="match status" value="1"/>
</dbReference>
<dbReference type="PIRSF" id="PIRSF000161">
    <property type="entry name" value="DHPR"/>
    <property type="match status" value="1"/>
</dbReference>
<dbReference type="SUPFAM" id="SSF55347">
    <property type="entry name" value="Glyceraldehyde-3-phosphate dehydrogenase-like, C-terminal domain"/>
    <property type="match status" value="1"/>
</dbReference>
<dbReference type="SUPFAM" id="SSF51735">
    <property type="entry name" value="NAD(P)-binding Rossmann-fold domains"/>
    <property type="match status" value="1"/>
</dbReference>
<dbReference type="PROSITE" id="PS01298">
    <property type="entry name" value="DAPB"/>
    <property type="match status" value="1"/>
</dbReference>
<keyword id="KW-0028">Amino-acid biosynthesis</keyword>
<keyword id="KW-0963">Cytoplasm</keyword>
<keyword id="KW-0220">Diaminopimelate biosynthesis</keyword>
<keyword id="KW-0457">Lysine biosynthesis</keyword>
<keyword id="KW-0520">NAD</keyword>
<keyword id="KW-0521">NADP</keyword>
<keyword id="KW-0560">Oxidoreductase</keyword>
<evidence type="ECO:0000255" key="1">
    <source>
        <dbReference type="HAMAP-Rule" id="MF_00102"/>
    </source>
</evidence>
<evidence type="ECO:0000305" key="2"/>
<feature type="chain" id="PRO_1000008599" description="4-hydroxy-tetrahydrodipicolinate reductase">
    <location>
        <begin position="1"/>
        <end position="245"/>
    </location>
</feature>
<feature type="active site" description="Proton donor/acceptor" evidence="1">
    <location>
        <position position="132"/>
    </location>
</feature>
<feature type="active site" description="Proton donor" evidence="1">
    <location>
        <position position="136"/>
    </location>
</feature>
<feature type="binding site" evidence="1">
    <location>
        <begin position="7"/>
        <end position="12"/>
    </location>
    <ligand>
        <name>NAD(+)</name>
        <dbReference type="ChEBI" id="CHEBI:57540"/>
    </ligand>
</feature>
<feature type="binding site" evidence="1">
    <location>
        <begin position="75"/>
        <end position="77"/>
    </location>
    <ligand>
        <name>NAD(+)</name>
        <dbReference type="ChEBI" id="CHEBI:57540"/>
    </ligand>
</feature>
<feature type="binding site" evidence="1">
    <location>
        <begin position="102"/>
        <end position="105"/>
    </location>
    <ligand>
        <name>NAD(+)</name>
        <dbReference type="ChEBI" id="CHEBI:57540"/>
    </ligand>
</feature>
<feature type="binding site" evidence="1">
    <location>
        <position position="133"/>
    </location>
    <ligand>
        <name>(S)-2,3,4,5-tetrahydrodipicolinate</name>
        <dbReference type="ChEBI" id="CHEBI:16845"/>
    </ligand>
</feature>
<feature type="binding site" evidence="1">
    <location>
        <begin position="142"/>
        <end position="143"/>
    </location>
    <ligand>
        <name>(S)-2,3,4,5-tetrahydrodipicolinate</name>
        <dbReference type="ChEBI" id="CHEBI:16845"/>
    </ligand>
</feature>
<comment type="function">
    <text evidence="1">Catalyzes the conversion of 4-hydroxy-tetrahydrodipicolinate (HTPA) to tetrahydrodipicolinate.</text>
</comment>
<comment type="catalytic activity">
    <reaction evidence="1">
        <text>(S)-2,3,4,5-tetrahydrodipicolinate + NAD(+) + H2O = (2S,4S)-4-hydroxy-2,3,4,5-tetrahydrodipicolinate + NADH + H(+)</text>
        <dbReference type="Rhea" id="RHEA:35323"/>
        <dbReference type="ChEBI" id="CHEBI:15377"/>
        <dbReference type="ChEBI" id="CHEBI:15378"/>
        <dbReference type="ChEBI" id="CHEBI:16845"/>
        <dbReference type="ChEBI" id="CHEBI:57540"/>
        <dbReference type="ChEBI" id="CHEBI:57945"/>
        <dbReference type="ChEBI" id="CHEBI:67139"/>
        <dbReference type="EC" id="1.17.1.8"/>
    </reaction>
</comment>
<comment type="catalytic activity">
    <reaction evidence="1">
        <text>(S)-2,3,4,5-tetrahydrodipicolinate + NADP(+) + H2O = (2S,4S)-4-hydroxy-2,3,4,5-tetrahydrodipicolinate + NADPH + H(+)</text>
        <dbReference type="Rhea" id="RHEA:35331"/>
        <dbReference type="ChEBI" id="CHEBI:15377"/>
        <dbReference type="ChEBI" id="CHEBI:15378"/>
        <dbReference type="ChEBI" id="CHEBI:16845"/>
        <dbReference type="ChEBI" id="CHEBI:57783"/>
        <dbReference type="ChEBI" id="CHEBI:58349"/>
        <dbReference type="ChEBI" id="CHEBI:67139"/>
        <dbReference type="EC" id="1.17.1.8"/>
    </reaction>
</comment>
<comment type="pathway">
    <text evidence="1">Amino-acid biosynthesis; L-lysine biosynthesis via DAP pathway; (S)-tetrahydrodipicolinate from L-aspartate: step 4/4.</text>
</comment>
<comment type="subcellular location">
    <subcellularLocation>
        <location evidence="1">Cytoplasm</location>
    </subcellularLocation>
</comment>
<comment type="similarity">
    <text evidence="1">Belongs to the DapB family.</text>
</comment>
<comment type="caution">
    <text evidence="2">Was originally thought to be a dihydrodipicolinate reductase (DHDPR), catalyzing the conversion of dihydrodipicolinate to tetrahydrodipicolinate. However, it was shown in E.coli that the substrate of the enzymatic reaction is not dihydrodipicolinate (DHDP) but in fact (2S,4S)-4-hydroxy-2,3,4,5-tetrahydrodipicolinic acid (HTPA), the product released by the DapA-catalyzed reaction.</text>
</comment>
<proteinExistence type="inferred from homology"/>
<protein>
    <recommendedName>
        <fullName evidence="1">4-hydroxy-tetrahydrodipicolinate reductase</fullName>
        <shortName evidence="1">HTPA reductase</shortName>
        <ecNumber evidence="1">1.17.1.8</ecNumber>
    </recommendedName>
</protein>
<reference key="1">
    <citation type="submission" date="2006-12" db="EMBL/GenBank/DDBJ databases">
        <title>Complete sequence of chromosome of Mycobacterium sp. KMS.</title>
        <authorList>
            <consortium name="US DOE Joint Genome Institute"/>
            <person name="Copeland A."/>
            <person name="Lucas S."/>
            <person name="Lapidus A."/>
            <person name="Barry K."/>
            <person name="Detter J.C."/>
            <person name="Glavina del Rio T."/>
            <person name="Hammon N."/>
            <person name="Israni S."/>
            <person name="Dalin E."/>
            <person name="Tice H."/>
            <person name="Pitluck S."/>
            <person name="Kiss H."/>
            <person name="Brettin T."/>
            <person name="Bruce D."/>
            <person name="Han C."/>
            <person name="Tapia R."/>
            <person name="Gilna P."/>
            <person name="Schmutz J."/>
            <person name="Larimer F."/>
            <person name="Land M."/>
            <person name="Hauser L."/>
            <person name="Kyrpides N."/>
            <person name="Mikhailova N."/>
            <person name="Miller C.D."/>
            <person name="Richardson P."/>
        </authorList>
    </citation>
    <scope>NUCLEOTIDE SEQUENCE [LARGE SCALE GENOMIC DNA]</scope>
    <source>
        <strain>KMS</strain>
    </source>
</reference>
<organism>
    <name type="scientific">Mycobacterium sp. (strain KMS)</name>
    <dbReference type="NCBI Taxonomy" id="189918"/>
    <lineage>
        <taxon>Bacteria</taxon>
        <taxon>Bacillati</taxon>
        <taxon>Actinomycetota</taxon>
        <taxon>Actinomycetes</taxon>
        <taxon>Mycobacteriales</taxon>
        <taxon>Mycobacteriaceae</taxon>
        <taxon>Mycobacterium</taxon>
    </lineage>
</organism>
<gene>
    <name evidence="1" type="primary">dapB</name>
    <name type="ordered locus">Mkms_2153</name>
</gene>
<accession>A1UEU3</accession>
<name>DAPB_MYCSK</name>
<sequence>MRVGVLGAKGKVGATMVQAVEAADDLTFTTGVDAGDPLSALVDTRTDVVIDFTHPSVVMDNLKFLIDNGIHAVVGTTGFTDERISQVQDWLADKPESAVLIAPNFAIGAVLSMHFAQQAARFFESVEVIELHHPHKADAPSGTAARTAKLIAAARKDMPPNPDATSTGLEGARGADVDGIPVHSIRLAGLVAHQEVLFGTQGETLTIRHDSLDRTSFVPGVLLAVRKVSERPGLTVGIEPLLDLT</sequence>